<evidence type="ECO:0000255" key="1">
    <source>
        <dbReference type="HAMAP-Rule" id="MF_00440"/>
    </source>
</evidence>
<evidence type="ECO:0000256" key="2">
    <source>
        <dbReference type="SAM" id="MobiDB-lite"/>
    </source>
</evidence>
<dbReference type="EMBL" id="CP000248">
    <property type="protein sequence ID" value="ABD26679.1"/>
    <property type="molecule type" value="Genomic_DNA"/>
</dbReference>
<dbReference type="RefSeq" id="WP_011445885.1">
    <property type="nucleotide sequence ID" value="NC_007794.1"/>
</dbReference>
<dbReference type="SMR" id="Q2G644"/>
<dbReference type="STRING" id="279238.Saro_2242"/>
<dbReference type="KEGG" id="nar:Saro_2242"/>
<dbReference type="eggNOG" id="COG1327">
    <property type="taxonomic scope" value="Bacteria"/>
</dbReference>
<dbReference type="HOGENOM" id="CLU_108412_0_0_5"/>
<dbReference type="Proteomes" id="UP000009134">
    <property type="component" value="Chromosome"/>
</dbReference>
<dbReference type="GO" id="GO:0005524">
    <property type="term" value="F:ATP binding"/>
    <property type="evidence" value="ECO:0007669"/>
    <property type="project" value="UniProtKB-KW"/>
</dbReference>
<dbReference type="GO" id="GO:0003677">
    <property type="term" value="F:DNA binding"/>
    <property type="evidence" value="ECO:0007669"/>
    <property type="project" value="UniProtKB-KW"/>
</dbReference>
<dbReference type="GO" id="GO:0008270">
    <property type="term" value="F:zinc ion binding"/>
    <property type="evidence" value="ECO:0007669"/>
    <property type="project" value="UniProtKB-UniRule"/>
</dbReference>
<dbReference type="GO" id="GO:0045892">
    <property type="term" value="P:negative regulation of DNA-templated transcription"/>
    <property type="evidence" value="ECO:0007669"/>
    <property type="project" value="UniProtKB-UniRule"/>
</dbReference>
<dbReference type="HAMAP" id="MF_00440">
    <property type="entry name" value="NrdR"/>
    <property type="match status" value="1"/>
</dbReference>
<dbReference type="InterPro" id="IPR005144">
    <property type="entry name" value="ATP-cone_dom"/>
</dbReference>
<dbReference type="InterPro" id="IPR055173">
    <property type="entry name" value="NrdR-like_N"/>
</dbReference>
<dbReference type="InterPro" id="IPR003796">
    <property type="entry name" value="RNR_NrdR-like"/>
</dbReference>
<dbReference type="NCBIfam" id="TIGR00244">
    <property type="entry name" value="transcriptional regulator NrdR"/>
    <property type="match status" value="1"/>
</dbReference>
<dbReference type="PANTHER" id="PTHR30455">
    <property type="entry name" value="TRANSCRIPTIONAL REPRESSOR NRDR"/>
    <property type="match status" value="1"/>
</dbReference>
<dbReference type="PANTHER" id="PTHR30455:SF2">
    <property type="entry name" value="TRANSCRIPTIONAL REPRESSOR NRDR"/>
    <property type="match status" value="1"/>
</dbReference>
<dbReference type="Pfam" id="PF03477">
    <property type="entry name" value="ATP-cone"/>
    <property type="match status" value="1"/>
</dbReference>
<dbReference type="Pfam" id="PF22811">
    <property type="entry name" value="Zn_ribbon_NrdR"/>
    <property type="match status" value="1"/>
</dbReference>
<dbReference type="PROSITE" id="PS51161">
    <property type="entry name" value="ATP_CONE"/>
    <property type="match status" value="1"/>
</dbReference>
<reference key="1">
    <citation type="submission" date="2006-01" db="EMBL/GenBank/DDBJ databases">
        <title>Complete sequence of Novosphingobium aromaticivorans DSM 12444.</title>
        <authorList>
            <consortium name="US DOE Joint Genome Institute"/>
            <person name="Copeland A."/>
            <person name="Lucas S."/>
            <person name="Lapidus A."/>
            <person name="Barry K."/>
            <person name="Detter J.C."/>
            <person name="Glavina T."/>
            <person name="Hammon N."/>
            <person name="Israni S."/>
            <person name="Pitluck S."/>
            <person name="Chain P."/>
            <person name="Malfatti S."/>
            <person name="Shin M."/>
            <person name="Vergez L."/>
            <person name="Schmutz J."/>
            <person name="Larimer F."/>
            <person name="Land M."/>
            <person name="Kyrpides N."/>
            <person name="Ivanova N."/>
            <person name="Fredrickson J."/>
            <person name="Balkwill D."/>
            <person name="Romine M.F."/>
            <person name="Richardson P."/>
        </authorList>
    </citation>
    <scope>NUCLEOTIDE SEQUENCE [LARGE SCALE GENOMIC DNA]</scope>
    <source>
        <strain>ATCC 700278 / DSM 12444 / CCUG 56034 / CIP 105152 / NBRC 16084 / F199</strain>
    </source>
</reference>
<feature type="chain" id="PRO_0000264193" description="Transcriptional repressor NrdR">
    <location>
        <begin position="1"/>
        <end position="159"/>
    </location>
</feature>
<feature type="domain" description="ATP-cone" evidence="1">
    <location>
        <begin position="49"/>
        <end position="139"/>
    </location>
</feature>
<feature type="zinc finger region" evidence="1">
    <location>
        <begin position="3"/>
        <end position="34"/>
    </location>
</feature>
<feature type="region of interest" description="Disordered" evidence="2">
    <location>
        <begin position="1"/>
        <end position="26"/>
    </location>
</feature>
<feature type="compositionally biased region" description="Basic and acidic residues" evidence="2">
    <location>
        <begin position="11"/>
        <end position="24"/>
    </location>
</feature>
<gene>
    <name evidence="1" type="primary">nrdR</name>
    <name type="ordered locus">Saro_2242</name>
</gene>
<organism>
    <name type="scientific">Novosphingobium aromaticivorans (strain ATCC 700278 / DSM 12444 / CCUG 56034 / CIP 105152 / NBRC 16084 / F199)</name>
    <dbReference type="NCBI Taxonomy" id="279238"/>
    <lineage>
        <taxon>Bacteria</taxon>
        <taxon>Pseudomonadati</taxon>
        <taxon>Pseudomonadota</taxon>
        <taxon>Alphaproteobacteria</taxon>
        <taxon>Sphingomonadales</taxon>
        <taxon>Sphingomonadaceae</taxon>
        <taxon>Novosphingobium</taxon>
    </lineage>
</organism>
<protein>
    <recommendedName>
        <fullName evidence="1">Transcriptional repressor NrdR</fullName>
    </recommendedName>
</protein>
<proteinExistence type="inferred from homology"/>
<comment type="function">
    <text evidence="1">Negatively regulates transcription of bacterial ribonucleotide reductase nrd genes and operons by binding to NrdR-boxes.</text>
</comment>
<comment type="cofactor">
    <cofactor evidence="1">
        <name>Zn(2+)</name>
        <dbReference type="ChEBI" id="CHEBI:29105"/>
    </cofactor>
    <text evidence="1">Binds 1 zinc ion.</text>
</comment>
<comment type="similarity">
    <text evidence="1">Belongs to the NrdR family.</text>
</comment>
<name>NRDR_NOVAD</name>
<sequence length="159" mass="18183">MRCPFCAHDNSQVKDSRPSEDNTSIRRRRQCEGCGARFTTFERVQLREVVVVKSGERREPFDRSKIEQSVALACRKRPVNQERLDQLVSGIQRQIETMGDAEVASKVIGEMVMEGLRQLDSVAYIRFASVYRDFTEARDFEEFASSVQEMSVHEVSGGE</sequence>
<keyword id="KW-0067">ATP-binding</keyword>
<keyword id="KW-0238">DNA-binding</keyword>
<keyword id="KW-0479">Metal-binding</keyword>
<keyword id="KW-0547">Nucleotide-binding</keyword>
<keyword id="KW-1185">Reference proteome</keyword>
<keyword id="KW-0678">Repressor</keyword>
<keyword id="KW-0804">Transcription</keyword>
<keyword id="KW-0805">Transcription regulation</keyword>
<keyword id="KW-0862">Zinc</keyword>
<keyword id="KW-0863">Zinc-finger</keyword>
<accession>Q2G644</accession>